<organism>
    <name type="scientific">Methylorubrum populi (strain ATCC BAA-705 / NCIMB 13946 / BJ001)</name>
    <name type="common">Methylobacterium populi</name>
    <dbReference type="NCBI Taxonomy" id="441620"/>
    <lineage>
        <taxon>Bacteria</taxon>
        <taxon>Pseudomonadati</taxon>
        <taxon>Pseudomonadota</taxon>
        <taxon>Alphaproteobacteria</taxon>
        <taxon>Hyphomicrobiales</taxon>
        <taxon>Methylobacteriaceae</taxon>
        <taxon>Methylorubrum</taxon>
    </lineage>
</organism>
<reference key="1">
    <citation type="submission" date="2008-04" db="EMBL/GenBank/DDBJ databases">
        <title>Complete sequence of chromosome of Methylobacterium populi BJ001.</title>
        <authorList>
            <consortium name="US DOE Joint Genome Institute"/>
            <person name="Copeland A."/>
            <person name="Lucas S."/>
            <person name="Lapidus A."/>
            <person name="Glavina del Rio T."/>
            <person name="Dalin E."/>
            <person name="Tice H."/>
            <person name="Bruce D."/>
            <person name="Goodwin L."/>
            <person name="Pitluck S."/>
            <person name="Chertkov O."/>
            <person name="Brettin T."/>
            <person name="Detter J.C."/>
            <person name="Han C."/>
            <person name="Kuske C.R."/>
            <person name="Schmutz J."/>
            <person name="Larimer F."/>
            <person name="Land M."/>
            <person name="Hauser L."/>
            <person name="Kyrpides N."/>
            <person name="Mikhailova N."/>
            <person name="Marx C."/>
            <person name="Richardson P."/>
        </authorList>
    </citation>
    <scope>NUCLEOTIDE SEQUENCE [LARGE SCALE GENOMIC DNA]</scope>
    <source>
        <strain>ATCC BAA-705 / NCIMB 13946 / BJ001</strain>
    </source>
</reference>
<dbReference type="EC" id="2.8.4.4" evidence="1"/>
<dbReference type="EMBL" id="CP001029">
    <property type="protein sequence ID" value="ACB82483.1"/>
    <property type="molecule type" value="Genomic_DNA"/>
</dbReference>
<dbReference type="RefSeq" id="WP_012456090.1">
    <property type="nucleotide sequence ID" value="NC_010725.1"/>
</dbReference>
<dbReference type="SMR" id="B1ZEV4"/>
<dbReference type="STRING" id="441620.Mpop_4382"/>
<dbReference type="KEGG" id="mpo:Mpop_4382"/>
<dbReference type="eggNOG" id="COG0621">
    <property type="taxonomic scope" value="Bacteria"/>
</dbReference>
<dbReference type="HOGENOM" id="CLU_018697_0_0_5"/>
<dbReference type="OrthoDB" id="9805215at2"/>
<dbReference type="Proteomes" id="UP000007136">
    <property type="component" value="Chromosome"/>
</dbReference>
<dbReference type="GO" id="GO:0005829">
    <property type="term" value="C:cytosol"/>
    <property type="evidence" value="ECO:0007669"/>
    <property type="project" value="TreeGrafter"/>
</dbReference>
<dbReference type="GO" id="GO:0051539">
    <property type="term" value="F:4 iron, 4 sulfur cluster binding"/>
    <property type="evidence" value="ECO:0007669"/>
    <property type="project" value="UniProtKB-UniRule"/>
</dbReference>
<dbReference type="GO" id="GO:0035599">
    <property type="term" value="F:aspartic acid methylthiotransferase activity"/>
    <property type="evidence" value="ECO:0007669"/>
    <property type="project" value="TreeGrafter"/>
</dbReference>
<dbReference type="GO" id="GO:0046872">
    <property type="term" value="F:metal ion binding"/>
    <property type="evidence" value="ECO:0007669"/>
    <property type="project" value="UniProtKB-KW"/>
</dbReference>
<dbReference type="GO" id="GO:0103039">
    <property type="term" value="F:protein methylthiotransferase activity"/>
    <property type="evidence" value="ECO:0007669"/>
    <property type="project" value="UniProtKB-EC"/>
</dbReference>
<dbReference type="GO" id="GO:0006400">
    <property type="term" value="P:tRNA modification"/>
    <property type="evidence" value="ECO:0007669"/>
    <property type="project" value="InterPro"/>
</dbReference>
<dbReference type="CDD" id="cd01335">
    <property type="entry name" value="Radical_SAM"/>
    <property type="match status" value="1"/>
</dbReference>
<dbReference type="FunFam" id="3.40.50.12160:FF:000002">
    <property type="entry name" value="Ribosomal protein S12 methylthiotransferase RimO"/>
    <property type="match status" value="1"/>
</dbReference>
<dbReference type="FunFam" id="3.80.30.20:FF:000001">
    <property type="entry name" value="tRNA-2-methylthio-N(6)-dimethylallyladenosine synthase 2"/>
    <property type="match status" value="1"/>
</dbReference>
<dbReference type="Gene3D" id="3.40.50.12160">
    <property type="entry name" value="Methylthiotransferase, N-terminal domain"/>
    <property type="match status" value="1"/>
</dbReference>
<dbReference type="Gene3D" id="2.40.50.140">
    <property type="entry name" value="Nucleic acid-binding proteins"/>
    <property type="match status" value="1"/>
</dbReference>
<dbReference type="Gene3D" id="3.80.30.20">
    <property type="entry name" value="tm_1862 like domain"/>
    <property type="match status" value="1"/>
</dbReference>
<dbReference type="HAMAP" id="MF_01865">
    <property type="entry name" value="MTTase_RimO"/>
    <property type="match status" value="1"/>
</dbReference>
<dbReference type="InterPro" id="IPR006638">
    <property type="entry name" value="Elp3/MiaA/NifB-like_rSAM"/>
</dbReference>
<dbReference type="InterPro" id="IPR005839">
    <property type="entry name" value="Methylthiotransferase"/>
</dbReference>
<dbReference type="InterPro" id="IPR020612">
    <property type="entry name" value="Methylthiotransferase_CS"/>
</dbReference>
<dbReference type="InterPro" id="IPR013848">
    <property type="entry name" value="Methylthiotransferase_N"/>
</dbReference>
<dbReference type="InterPro" id="IPR038135">
    <property type="entry name" value="Methylthiotransferase_N_sf"/>
</dbReference>
<dbReference type="InterPro" id="IPR012340">
    <property type="entry name" value="NA-bd_OB-fold"/>
</dbReference>
<dbReference type="InterPro" id="IPR005840">
    <property type="entry name" value="Ribosomal_uS12_MeSTrfase_RimO"/>
</dbReference>
<dbReference type="InterPro" id="IPR007197">
    <property type="entry name" value="rSAM"/>
</dbReference>
<dbReference type="InterPro" id="IPR023404">
    <property type="entry name" value="rSAM_horseshoe"/>
</dbReference>
<dbReference type="InterPro" id="IPR002792">
    <property type="entry name" value="TRAM_dom"/>
</dbReference>
<dbReference type="NCBIfam" id="TIGR01125">
    <property type="entry name" value="30S ribosomal protein S12 methylthiotransferase RimO"/>
    <property type="match status" value="1"/>
</dbReference>
<dbReference type="NCBIfam" id="TIGR00089">
    <property type="entry name" value="MiaB/RimO family radical SAM methylthiotransferase"/>
    <property type="match status" value="1"/>
</dbReference>
<dbReference type="PANTHER" id="PTHR43837">
    <property type="entry name" value="RIBOSOMAL PROTEIN S12 METHYLTHIOTRANSFERASE RIMO"/>
    <property type="match status" value="1"/>
</dbReference>
<dbReference type="PANTHER" id="PTHR43837:SF1">
    <property type="entry name" value="RIBOSOMAL PROTEIN US12 METHYLTHIOTRANSFERASE RIMO"/>
    <property type="match status" value="1"/>
</dbReference>
<dbReference type="Pfam" id="PF04055">
    <property type="entry name" value="Radical_SAM"/>
    <property type="match status" value="1"/>
</dbReference>
<dbReference type="Pfam" id="PF18693">
    <property type="entry name" value="TRAM_2"/>
    <property type="match status" value="1"/>
</dbReference>
<dbReference type="Pfam" id="PF00919">
    <property type="entry name" value="UPF0004"/>
    <property type="match status" value="1"/>
</dbReference>
<dbReference type="SFLD" id="SFLDG01082">
    <property type="entry name" value="B12-binding_domain_containing"/>
    <property type="match status" value="1"/>
</dbReference>
<dbReference type="SFLD" id="SFLDG01061">
    <property type="entry name" value="methylthiotransferase"/>
    <property type="match status" value="1"/>
</dbReference>
<dbReference type="SFLD" id="SFLDF00274">
    <property type="entry name" value="ribosomal_protein_S12_methylth"/>
    <property type="match status" value="1"/>
</dbReference>
<dbReference type="SMART" id="SM00729">
    <property type="entry name" value="Elp3"/>
    <property type="match status" value="1"/>
</dbReference>
<dbReference type="SUPFAM" id="SSF102114">
    <property type="entry name" value="Radical SAM enzymes"/>
    <property type="match status" value="1"/>
</dbReference>
<dbReference type="PROSITE" id="PS51449">
    <property type="entry name" value="MTTASE_N"/>
    <property type="match status" value="1"/>
</dbReference>
<dbReference type="PROSITE" id="PS01278">
    <property type="entry name" value="MTTASE_RADICAL"/>
    <property type="match status" value="1"/>
</dbReference>
<dbReference type="PROSITE" id="PS51918">
    <property type="entry name" value="RADICAL_SAM"/>
    <property type="match status" value="1"/>
</dbReference>
<dbReference type="PROSITE" id="PS50926">
    <property type="entry name" value="TRAM"/>
    <property type="match status" value="1"/>
</dbReference>
<proteinExistence type="inferred from homology"/>
<sequence length="448" mass="49451">MTATASPSDTKGAAAPRISFVSLGCPKALVDSERILTHLRAEGYELSRRHDGADVVIVNTCGFLDSAKAESLQAIGEAMAENGRVIVTGCMGAQPEEIREKYPNLLAVTGPQAYESVVAAVHEAVPPAHDPFLDLIPPQGVKLTPRHYAYLKISEGCNNRCTFCIIPSLRGDLVSRPAGDVLREAEKLVKAGVKELLVVSQDTSAYGIDTRYATSPWRDREVRARFYDLASELGELGAWVRLHYVYPYPHVDEVIPLMAEGKILPYLDMPLQHASPSVLKRMRRPGNQERQLDRIRRWREICPELAIRSTFIVGFPGETEAEFEELLDWIREARLERVGCFEYEPVKGAPANDLGLLVPPEVKAERKRRFMEAQAGVSLKLQRAKVGKRLQVIIDEAGPGGARGRSKADAPEIDGSVHVASRRPLRPGDIVTVKIERADAYDLHGIAV</sequence>
<gene>
    <name evidence="1" type="primary">rimO</name>
    <name type="ordered locus">Mpop_4382</name>
</gene>
<name>RIMO_METPB</name>
<evidence type="ECO:0000255" key="1">
    <source>
        <dbReference type="HAMAP-Rule" id="MF_01865"/>
    </source>
</evidence>
<evidence type="ECO:0000255" key="2">
    <source>
        <dbReference type="PROSITE-ProRule" id="PRU01266"/>
    </source>
</evidence>
<protein>
    <recommendedName>
        <fullName evidence="1">Ribosomal protein uS12 methylthiotransferase RimO</fullName>
        <shortName evidence="1">uS12 MTTase</shortName>
        <shortName evidence="1">uS12 methylthiotransferase</shortName>
        <ecNumber evidence="1">2.8.4.4</ecNumber>
    </recommendedName>
    <alternativeName>
        <fullName evidence="1">Ribosomal protein uS12 (aspartate-C(3))-methylthiotransferase</fullName>
    </alternativeName>
    <alternativeName>
        <fullName evidence="1">Ribosome maturation factor RimO</fullName>
    </alternativeName>
</protein>
<accession>B1ZEV4</accession>
<keyword id="KW-0004">4Fe-4S</keyword>
<keyword id="KW-0963">Cytoplasm</keyword>
<keyword id="KW-0408">Iron</keyword>
<keyword id="KW-0411">Iron-sulfur</keyword>
<keyword id="KW-0479">Metal-binding</keyword>
<keyword id="KW-0949">S-adenosyl-L-methionine</keyword>
<keyword id="KW-0808">Transferase</keyword>
<comment type="function">
    <text evidence="1">Catalyzes the methylthiolation of an aspartic acid residue of ribosomal protein uS12.</text>
</comment>
<comment type="catalytic activity">
    <reaction evidence="1">
        <text>L-aspartate(89)-[ribosomal protein uS12]-hydrogen + (sulfur carrier)-SH + AH2 + 2 S-adenosyl-L-methionine = 3-methylsulfanyl-L-aspartate(89)-[ribosomal protein uS12]-hydrogen + (sulfur carrier)-H + 5'-deoxyadenosine + L-methionine + A + S-adenosyl-L-homocysteine + 2 H(+)</text>
        <dbReference type="Rhea" id="RHEA:37087"/>
        <dbReference type="Rhea" id="RHEA-COMP:10460"/>
        <dbReference type="Rhea" id="RHEA-COMP:10461"/>
        <dbReference type="Rhea" id="RHEA-COMP:14737"/>
        <dbReference type="Rhea" id="RHEA-COMP:14739"/>
        <dbReference type="ChEBI" id="CHEBI:13193"/>
        <dbReference type="ChEBI" id="CHEBI:15378"/>
        <dbReference type="ChEBI" id="CHEBI:17319"/>
        <dbReference type="ChEBI" id="CHEBI:17499"/>
        <dbReference type="ChEBI" id="CHEBI:29917"/>
        <dbReference type="ChEBI" id="CHEBI:29961"/>
        <dbReference type="ChEBI" id="CHEBI:57844"/>
        <dbReference type="ChEBI" id="CHEBI:57856"/>
        <dbReference type="ChEBI" id="CHEBI:59789"/>
        <dbReference type="ChEBI" id="CHEBI:64428"/>
        <dbReference type="ChEBI" id="CHEBI:73599"/>
        <dbReference type="EC" id="2.8.4.4"/>
    </reaction>
</comment>
<comment type="cofactor">
    <cofactor evidence="1">
        <name>[4Fe-4S] cluster</name>
        <dbReference type="ChEBI" id="CHEBI:49883"/>
    </cofactor>
    <text evidence="1">Binds 2 [4Fe-4S] clusters. One cluster is coordinated with 3 cysteines and an exchangeable S-adenosyl-L-methionine.</text>
</comment>
<comment type="subcellular location">
    <subcellularLocation>
        <location evidence="1">Cytoplasm</location>
    </subcellularLocation>
</comment>
<comment type="similarity">
    <text evidence="1">Belongs to the methylthiotransferase family. RimO subfamily.</text>
</comment>
<feature type="chain" id="PRO_0000374893" description="Ribosomal protein uS12 methylthiotransferase RimO">
    <location>
        <begin position="1"/>
        <end position="448"/>
    </location>
</feature>
<feature type="domain" description="MTTase N-terminal" evidence="1">
    <location>
        <begin position="16"/>
        <end position="126"/>
    </location>
</feature>
<feature type="domain" description="Radical SAM core" evidence="2">
    <location>
        <begin position="143"/>
        <end position="380"/>
    </location>
</feature>
<feature type="domain" description="TRAM" evidence="1">
    <location>
        <begin position="383"/>
        <end position="448"/>
    </location>
</feature>
<feature type="binding site" evidence="1">
    <location>
        <position position="25"/>
    </location>
    <ligand>
        <name>[4Fe-4S] cluster</name>
        <dbReference type="ChEBI" id="CHEBI:49883"/>
        <label>1</label>
    </ligand>
</feature>
<feature type="binding site" evidence="1">
    <location>
        <position position="61"/>
    </location>
    <ligand>
        <name>[4Fe-4S] cluster</name>
        <dbReference type="ChEBI" id="CHEBI:49883"/>
        <label>1</label>
    </ligand>
</feature>
<feature type="binding site" evidence="1">
    <location>
        <position position="90"/>
    </location>
    <ligand>
        <name>[4Fe-4S] cluster</name>
        <dbReference type="ChEBI" id="CHEBI:49883"/>
        <label>1</label>
    </ligand>
</feature>
<feature type="binding site" evidence="1">
    <location>
        <position position="157"/>
    </location>
    <ligand>
        <name>[4Fe-4S] cluster</name>
        <dbReference type="ChEBI" id="CHEBI:49883"/>
        <label>2</label>
        <note>4Fe-4S-S-AdoMet</note>
    </ligand>
</feature>
<feature type="binding site" evidence="1">
    <location>
        <position position="161"/>
    </location>
    <ligand>
        <name>[4Fe-4S] cluster</name>
        <dbReference type="ChEBI" id="CHEBI:49883"/>
        <label>2</label>
        <note>4Fe-4S-S-AdoMet</note>
    </ligand>
</feature>
<feature type="binding site" evidence="1">
    <location>
        <position position="164"/>
    </location>
    <ligand>
        <name>[4Fe-4S] cluster</name>
        <dbReference type="ChEBI" id="CHEBI:49883"/>
        <label>2</label>
        <note>4Fe-4S-S-AdoMet</note>
    </ligand>
</feature>